<comment type="similarity">
    <text evidence="1">Belongs to the UPF0502 family.</text>
</comment>
<name>Y2112_JANMA</name>
<gene>
    <name type="ordered locus">mma_2112</name>
</gene>
<dbReference type="EMBL" id="CP000269">
    <property type="protein sequence ID" value="ABR90024.1"/>
    <property type="molecule type" value="Genomic_DNA"/>
</dbReference>
<dbReference type="RefSeq" id="WP_012079965.1">
    <property type="nucleotide sequence ID" value="NC_009659.1"/>
</dbReference>
<dbReference type="SMR" id="A6SZV5"/>
<dbReference type="STRING" id="375286.mma_2112"/>
<dbReference type="KEGG" id="mms:mma_2112"/>
<dbReference type="eggNOG" id="COG3132">
    <property type="taxonomic scope" value="Bacteria"/>
</dbReference>
<dbReference type="HOGENOM" id="CLU_057831_1_0_4"/>
<dbReference type="OrthoDB" id="9784785at2"/>
<dbReference type="Proteomes" id="UP000006388">
    <property type="component" value="Chromosome"/>
</dbReference>
<dbReference type="Gene3D" id="1.10.10.10">
    <property type="entry name" value="Winged helix-like DNA-binding domain superfamily/Winged helix DNA-binding domain"/>
    <property type="match status" value="2"/>
</dbReference>
<dbReference type="HAMAP" id="MF_01584">
    <property type="entry name" value="UPF0502"/>
    <property type="match status" value="1"/>
</dbReference>
<dbReference type="InterPro" id="IPR007432">
    <property type="entry name" value="DUF480"/>
</dbReference>
<dbReference type="InterPro" id="IPR036388">
    <property type="entry name" value="WH-like_DNA-bd_sf"/>
</dbReference>
<dbReference type="InterPro" id="IPR036390">
    <property type="entry name" value="WH_DNA-bd_sf"/>
</dbReference>
<dbReference type="PANTHER" id="PTHR38768">
    <property type="entry name" value="UPF0502 PROTEIN YCEH"/>
    <property type="match status" value="1"/>
</dbReference>
<dbReference type="PANTHER" id="PTHR38768:SF1">
    <property type="entry name" value="UPF0502 PROTEIN YCEH"/>
    <property type="match status" value="1"/>
</dbReference>
<dbReference type="Pfam" id="PF04337">
    <property type="entry name" value="DUF480"/>
    <property type="match status" value="1"/>
</dbReference>
<dbReference type="SUPFAM" id="SSF46785">
    <property type="entry name" value="Winged helix' DNA-binding domain"/>
    <property type="match status" value="2"/>
</dbReference>
<reference key="1">
    <citation type="journal article" date="2007" name="PLoS Genet.">
        <title>Genome analysis of Minibacterium massiliensis highlights the convergent evolution of water-living bacteria.</title>
        <authorList>
            <person name="Audic S."/>
            <person name="Robert C."/>
            <person name="Campagna B."/>
            <person name="Parinello H."/>
            <person name="Claverie J.-M."/>
            <person name="Raoult D."/>
            <person name="Drancourt M."/>
        </authorList>
    </citation>
    <scope>NUCLEOTIDE SEQUENCE [LARGE SCALE GENOMIC DNA]</scope>
    <source>
        <strain>Marseille</strain>
    </source>
</reference>
<proteinExistence type="inferred from homology"/>
<accession>A6SZV5</accession>
<organism>
    <name type="scientific">Janthinobacterium sp. (strain Marseille)</name>
    <name type="common">Minibacterium massiliensis</name>
    <dbReference type="NCBI Taxonomy" id="375286"/>
    <lineage>
        <taxon>Bacteria</taxon>
        <taxon>Pseudomonadati</taxon>
        <taxon>Pseudomonadota</taxon>
        <taxon>Betaproteobacteria</taxon>
        <taxon>Burkholderiales</taxon>
        <taxon>Oxalobacteraceae</taxon>
        <taxon>Janthinobacterium</taxon>
    </lineage>
</organism>
<sequence>MTDEVSNTAAADVRDNGQIVFDAGAIRVLAVLAEKEALTPDAYPMSINALTNGCNQLTSRDPVMALTEVDVQGILQELIADKFVAEVNQAGARVSKYEHRLRMKWSLEQDKLAVLTVLMLRGIQTAGEIRTRSGRLHEFATIADVEAALQFLIDKYPPLVARLPRAPGTKETRYAPLLSSEVFPEAGELPVAAASGVSRHDRIGQLEAEVSSLRDEVEALKAQFQQFKQQFE</sequence>
<feature type="chain" id="PRO_0000309394" description="UPF0502 protein mma_2112">
    <location>
        <begin position="1"/>
        <end position="232"/>
    </location>
</feature>
<protein>
    <recommendedName>
        <fullName evidence="1">UPF0502 protein mma_2112</fullName>
    </recommendedName>
</protein>
<evidence type="ECO:0000255" key="1">
    <source>
        <dbReference type="HAMAP-Rule" id="MF_01584"/>
    </source>
</evidence>